<dbReference type="EC" id="4.6.1.19" evidence="4"/>
<dbReference type="EMBL" id="U85625">
    <property type="protein sequence ID" value="AAC51363.2"/>
    <property type="molecule type" value="mRNA"/>
</dbReference>
<dbReference type="EMBL" id="AJ419865">
    <property type="protein sequence ID" value="CAD12030.1"/>
    <property type="molecule type" value="mRNA"/>
</dbReference>
<dbReference type="EMBL" id="AJ419866">
    <property type="protein sequence ID" value="CAD12031.1"/>
    <property type="molecule type" value="mRNA"/>
</dbReference>
<dbReference type="EMBL" id="AK315467">
    <property type="protein sequence ID" value="BAG37854.1"/>
    <property type="molecule type" value="mRNA"/>
</dbReference>
<dbReference type="EMBL" id="AL133458">
    <property type="status" value="NOT_ANNOTATED_CDS"/>
    <property type="molecule type" value="Genomic_DNA"/>
</dbReference>
<dbReference type="EMBL" id="AL159163">
    <property type="status" value="NOT_ANNOTATED_CDS"/>
    <property type="molecule type" value="Genomic_DNA"/>
</dbReference>
<dbReference type="EMBL" id="CH471051">
    <property type="protein sequence ID" value="EAW47512.1"/>
    <property type="molecule type" value="Genomic_DNA"/>
</dbReference>
<dbReference type="EMBL" id="CH471051">
    <property type="protein sequence ID" value="EAW47513.1"/>
    <property type="molecule type" value="Genomic_DNA"/>
</dbReference>
<dbReference type="EMBL" id="CH471051">
    <property type="protein sequence ID" value="EAW47514.1"/>
    <property type="molecule type" value="Genomic_DNA"/>
</dbReference>
<dbReference type="EMBL" id="BC001660">
    <property type="protein sequence ID" value="AAH01660.1"/>
    <property type="molecule type" value="mRNA"/>
</dbReference>
<dbReference type="EMBL" id="BC001819">
    <property type="protein sequence ID" value="AAH01819.1"/>
    <property type="molecule type" value="mRNA"/>
</dbReference>
<dbReference type="EMBL" id="BC039713">
    <property type="protein sequence ID" value="AAH39713.1"/>
    <property type="molecule type" value="mRNA"/>
</dbReference>
<dbReference type="EMBL" id="BC051912">
    <property type="protein sequence ID" value="AAH51912.1"/>
    <property type="molecule type" value="mRNA"/>
</dbReference>
<dbReference type="CCDS" id="CCDS5295.1">
    <molecule id="O00584-1"/>
</dbReference>
<dbReference type="PIR" id="S78046">
    <property type="entry name" value="S78046"/>
</dbReference>
<dbReference type="RefSeq" id="NP_003721.2">
    <molecule id="O00584-1"/>
    <property type="nucleotide sequence ID" value="NM_003730.4"/>
</dbReference>
<dbReference type="PDB" id="3T0O">
    <property type="method" value="X-ray"/>
    <property type="resolution" value="1.59 A"/>
    <property type="chains" value="A=25-256"/>
</dbReference>
<dbReference type="PDBsum" id="3T0O"/>
<dbReference type="SMR" id="O00584"/>
<dbReference type="BioGRID" id="114188">
    <property type="interactions" value="21"/>
</dbReference>
<dbReference type="FunCoup" id="O00584">
    <property type="interactions" value="523"/>
</dbReference>
<dbReference type="IntAct" id="O00584">
    <property type="interactions" value="10"/>
</dbReference>
<dbReference type="MINT" id="O00584"/>
<dbReference type="STRING" id="9606.ENSP00000426455"/>
<dbReference type="GlyConnect" id="1719">
    <property type="glycosylation" value="7 N-Linked glycans (2 sites)"/>
</dbReference>
<dbReference type="GlyCosmos" id="O00584">
    <property type="glycosylation" value="4 sites, 9 glycans"/>
</dbReference>
<dbReference type="GlyGen" id="O00584">
    <property type="glycosylation" value="4 sites, 22 N-linked glycans (3 sites), 2 O-linked glycans (1 site)"/>
</dbReference>
<dbReference type="iPTMnet" id="O00584"/>
<dbReference type="PhosphoSitePlus" id="O00584"/>
<dbReference type="SwissPalm" id="O00584"/>
<dbReference type="BioMuta" id="RNASET2"/>
<dbReference type="jPOST" id="O00584"/>
<dbReference type="MassIVE" id="O00584"/>
<dbReference type="PaxDb" id="9606-ENSP00000426455"/>
<dbReference type="PeptideAtlas" id="O00584"/>
<dbReference type="ProteomicsDB" id="47985">
    <molecule id="O00584-1"/>
</dbReference>
<dbReference type="ProteomicsDB" id="47986">
    <molecule id="O00584-2"/>
</dbReference>
<dbReference type="Pumba" id="O00584"/>
<dbReference type="Antibodypedia" id="33528">
    <property type="antibodies" value="189 antibodies from 29 providers"/>
</dbReference>
<dbReference type="DNASU" id="8635"/>
<dbReference type="Ensembl" id="ENST00000421787.5">
    <molecule id="O00584-2"/>
    <property type="protein sequence ID" value="ENSP00000390833.1"/>
    <property type="gene ID" value="ENSG00000026297.17"/>
</dbReference>
<dbReference type="Ensembl" id="ENST00000476238.6">
    <molecule id="O00584-1"/>
    <property type="protein sequence ID" value="ENSP00000422846.1"/>
    <property type="gene ID" value="ENSG00000026297.17"/>
</dbReference>
<dbReference type="Ensembl" id="ENST00000508775.6">
    <molecule id="O00584-1"/>
    <property type="protein sequence ID" value="ENSP00000426455.2"/>
    <property type="gene ID" value="ENSG00000026297.17"/>
</dbReference>
<dbReference type="GeneID" id="8635"/>
<dbReference type="KEGG" id="hsa:8635"/>
<dbReference type="MANE-Select" id="ENST00000508775.6">
    <property type="protein sequence ID" value="ENSP00000426455.2"/>
    <property type="RefSeq nucleotide sequence ID" value="NM_003730.6"/>
    <property type="RefSeq protein sequence ID" value="NP_003721.2"/>
</dbReference>
<dbReference type="UCSC" id="uc003qve.4">
    <molecule id="O00584-1"/>
    <property type="organism name" value="human"/>
</dbReference>
<dbReference type="AGR" id="HGNC:21686"/>
<dbReference type="CTD" id="8635"/>
<dbReference type="DisGeNET" id="8635"/>
<dbReference type="GeneCards" id="RNASET2"/>
<dbReference type="HGNC" id="HGNC:21686">
    <property type="gene designation" value="RNASET2"/>
</dbReference>
<dbReference type="HPA" id="ENSG00000026297">
    <property type="expression patterns" value="Low tissue specificity"/>
</dbReference>
<dbReference type="MalaCards" id="RNASET2"/>
<dbReference type="MIM" id="612944">
    <property type="type" value="gene"/>
</dbReference>
<dbReference type="MIM" id="612951">
    <property type="type" value="phenotype"/>
</dbReference>
<dbReference type="neXtProt" id="NX_O00584"/>
<dbReference type="OpenTargets" id="ENSG00000026297"/>
<dbReference type="Orphanet" id="85136">
    <property type="disease" value="Cystic leukoencephalopathy without megalencephaly"/>
</dbReference>
<dbReference type="PharmGKB" id="PA128394541"/>
<dbReference type="VEuPathDB" id="HostDB:ENSG00000026297"/>
<dbReference type="eggNOG" id="KOG1642">
    <property type="taxonomic scope" value="Eukaryota"/>
</dbReference>
<dbReference type="GeneTree" id="ENSGT00640000091563"/>
<dbReference type="HOGENOM" id="CLU_2037289_0_0_1"/>
<dbReference type="InParanoid" id="O00584"/>
<dbReference type="OrthoDB" id="435754at2759"/>
<dbReference type="PAN-GO" id="O00584">
    <property type="GO annotations" value="3 GO annotations based on evolutionary models"/>
</dbReference>
<dbReference type="PhylomeDB" id="O00584"/>
<dbReference type="TreeFam" id="TF315063"/>
<dbReference type="BRENDA" id="4.6.1.19">
    <property type="organism ID" value="2681"/>
</dbReference>
<dbReference type="PathwayCommons" id="O00584"/>
<dbReference type="Reactome" id="R-HSA-6798695">
    <property type="pathway name" value="Neutrophil degranulation"/>
</dbReference>
<dbReference type="SignaLink" id="O00584"/>
<dbReference type="BioGRID-ORCS" id="8635">
    <property type="hits" value="16 hits in 1146 CRISPR screens"/>
</dbReference>
<dbReference type="CD-CODE" id="232F8A39">
    <property type="entry name" value="P-body"/>
</dbReference>
<dbReference type="ChiTaRS" id="RNASET2">
    <property type="organism name" value="human"/>
</dbReference>
<dbReference type="EvolutionaryTrace" id="O00584"/>
<dbReference type="GeneWiki" id="RNASET2"/>
<dbReference type="GenomeRNAi" id="8635"/>
<dbReference type="Pharos" id="O00584">
    <property type="development level" value="Tbio"/>
</dbReference>
<dbReference type="PRO" id="PR:O00584"/>
<dbReference type="Proteomes" id="UP000005640">
    <property type="component" value="Chromosome 6"/>
</dbReference>
<dbReference type="RNAct" id="O00584">
    <property type="molecule type" value="protein"/>
</dbReference>
<dbReference type="Bgee" id="ENSG00000026297">
    <property type="expression patterns" value="Expressed in right uterine tube and 202 other cell types or tissues"/>
</dbReference>
<dbReference type="ExpressionAtlas" id="O00584">
    <property type="expression patterns" value="baseline and differential"/>
</dbReference>
<dbReference type="GO" id="GO:0035578">
    <property type="term" value="C:azurophil granule lumen"/>
    <property type="evidence" value="ECO:0000304"/>
    <property type="project" value="Reactome"/>
</dbReference>
<dbReference type="GO" id="GO:0005788">
    <property type="term" value="C:endoplasmic reticulum lumen"/>
    <property type="evidence" value="ECO:0000314"/>
    <property type="project" value="UniProtKB"/>
</dbReference>
<dbReference type="GO" id="GO:0070062">
    <property type="term" value="C:extracellular exosome"/>
    <property type="evidence" value="ECO:0007005"/>
    <property type="project" value="UniProtKB"/>
</dbReference>
<dbReference type="GO" id="GO:0005576">
    <property type="term" value="C:extracellular region"/>
    <property type="evidence" value="ECO:0000318"/>
    <property type="project" value="GO_Central"/>
</dbReference>
<dbReference type="GO" id="GO:0005615">
    <property type="term" value="C:extracellular space"/>
    <property type="evidence" value="ECO:0000314"/>
    <property type="project" value="UniProtKB"/>
</dbReference>
<dbReference type="GO" id="GO:0043202">
    <property type="term" value="C:lysosomal lumen"/>
    <property type="evidence" value="ECO:0007669"/>
    <property type="project" value="UniProtKB-SubCell"/>
</dbReference>
<dbReference type="GO" id="GO:0005764">
    <property type="term" value="C:lysosome"/>
    <property type="evidence" value="ECO:0000314"/>
    <property type="project" value="UniProtKB"/>
</dbReference>
<dbReference type="GO" id="GO:0005758">
    <property type="term" value="C:mitochondrial intermembrane space"/>
    <property type="evidence" value="ECO:0007669"/>
    <property type="project" value="UniProtKB-SubCell"/>
</dbReference>
<dbReference type="GO" id="GO:0033897">
    <property type="term" value="F:ribonuclease T2 activity"/>
    <property type="evidence" value="ECO:0007669"/>
    <property type="project" value="UniProtKB-EC"/>
</dbReference>
<dbReference type="GO" id="GO:0003723">
    <property type="term" value="F:RNA binding"/>
    <property type="evidence" value="ECO:0007669"/>
    <property type="project" value="InterPro"/>
</dbReference>
<dbReference type="GO" id="GO:0004521">
    <property type="term" value="F:RNA endonuclease activity"/>
    <property type="evidence" value="ECO:0000318"/>
    <property type="project" value="GO_Central"/>
</dbReference>
<dbReference type="GO" id="GO:0004540">
    <property type="term" value="F:RNA nuclease activity"/>
    <property type="evidence" value="ECO:0000314"/>
    <property type="project" value="UniProtKB"/>
</dbReference>
<dbReference type="GO" id="GO:0045087">
    <property type="term" value="P:innate immune response"/>
    <property type="evidence" value="ECO:0007669"/>
    <property type="project" value="UniProtKB-KW"/>
</dbReference>
<dbReference type="GO" id="GO:0006401">
    <property type="term" value="P:RNA catabolic process"/>
    <property type="evidence" value="ECO:0000314"/>
    <property type="project" value="UniProtKB"/>
</dbReference>
<dbReference type="CDD" id="cd01061">
    <property type="entry name" value="RNase_T2_euk"/>
    <property type="match status" value="1"/>
</dbReference>
<dbReference type="FunFam" id="3.90.730.10:FF:000001">
    <property type="entry name" value="Ribonuclease T2"/>
    <property type="match status" value="1"/>
</dbReference>
<dbReference type="Gene3D" id="3.90.730.10">
    <property type="entry name" value="Ribonuclease T2-like"/>
    <property type="match status" value="1"/>
</dbReference>
<dbReference type="InterPro" id="IPR033697">
    <property type="entry name" value="Ribonuclease_T2_eukaryotic"/>
</dbReference>
<dbReference type="InterPro" id="IPR001568">
    <property type="entry name" value="RNase_T2-like"/>
</dbReference>
<dbReference type="InterPro" id="IPR036430">
    <property type="entry name" value="RNase_T2-like_sf"/>
</dbReference>
<dbReference type="InterPro" id="IPR018188">
    <property type="entry name" value="RNase_T2_His_AS_1"/>
</dbReference>
<dbReference type="InterPro" id="IPR033130">
    <property type="entry name" value="RNase_T2_His_AS_2"/>
</dbReference>
<dbReference type="PANTHER" id="PTHR11240">
    <property type="entry name" value="RIBONUCLEASE T2"/>
    <property type="match status" value="1"/>
</dbReference>
<dbReference type="PANTHER" id="PTHR11240:SF22">
    <property type="entry name" value="RIBONUCLEASE T2"/>
    <property type="match status" value="1"/>
</dbReference>
<dbReference type="Pfam" id="PF00445">
    <property type="entry name" value="Ribonuclease_T2"/>
    <property type="match status" value="1"/>
</dbReference>
<dbReference type="SUPFAM" id="SSF55895">
    <property type="entry name" value="Ribonuclease Rh-like"/>
    <property type="match status" value="1"/>
</dbReference>
<dbReference type="PROSITE" id="PS00530">
    <property type="entry name" value="RNASE_T2_1"/>
    <property type="match status" value="1"/>
</dbReference>
<dbReference type="PROSITE" id="PS00531">
    <property type="entry name" value="RNASE_T2_2"/>
    <property type="match status" value="1"/>
</dbReference>
<feature type="signal peptide" evidence="2">
    <location>
        <begin position="1"/>
        <end position="24"/>
    </location>
</feature>
<feature type="chain" id="PRO_0000030987" description="Ribonuclease T2">
    <location>
        <begin position="25"/>
        <end position="256"/>
    </location>
</feature>
<feature type="active site" evidence="3">
    <location>
        <position position="65"/>
    </location>
</feature>
<feature type="active site" evidence="1">
    <location>
        <position position="114"/>
    </location>
</feature>
<feature type="active site" evidence="4">
    <location>
        <position position="118"/>
    </location>
</feature>
<feature type="glycosylation site" description="N-linked (GlcNAc...) asparagine" evidence="9">
    <location>
        <position position="76"/>
    </location>
</feature>
<feature type="glycosylation site" description="N-linked (GlcNAc...) asparagine" evidence="9">
    <location>
        <position position="106"/>
    </location>
</feature>
<feature type="glycosylation site" description="N-linked (GlcNAc...) asparagine" evidence="9">
    <location>
        <position position="212"/>
    </location>
</feature>
<feature type="disulfide bond" evidence="9">
    <location>
        <begin position="48"/>
        <end position="55"/>
    </location>
</feature>
<feature type="disulfide bond" evidence="9">
    <location>
        <begin position="75"/>
        <end position="121"/>
    </location>
</feature>
<feature type="disulfide bond" evidence="9">
    <location>
        <begin position="184"/>
        <end position="241"/>
    </location>
</feature>
<feature type="disulfide bond" evidence="9">
    <location>
        <begin position="202"/>
        <end position="213"/>
    </location>
</feature>
<feature type="splice variant" id="VSP_008405" description="In isoform 2." evidence="15">
    <original>DLLPEMRAYWPDVIHSFPNRSRFWKHEWEKHGTC</original>
    <variation>KNWMEITDSSLPSPSTLPIINIFYSVLHLLQLMN</variation>
    <location>
        <begin position="88"/>
        <end position="121"/>
    </location>
</feature>
<feature type="splice variant" id="VSP_008406" description="In isoform 2." evidence="15">
    <location>
        <begin position="122"/>
        <end position="256"/>
    </location>
</feature>
<feature type="sequence variant" id="VAR_063596" description="In LCWM; the loss of a disulfide bond may affect protein folding and stability; the protein is retained in the endoplasmic reticulum and the mitochondria while lysosomal localization is disrupted; dbSNP:rs121918137." evidence="7 8 10">
    <original>C</original>
    <variation>R</variation>
    <location>
        <position position="184"/>
    </location>
</feature>
<feature type="sequence variant" id="VAR_013004" description="In dbSNP:rs11159.">
    <original>R</original>
    <variation>W</variation>
    <location>
        <position position="236"/>
    </location>
</feature>
<feature type="mutagenesis site" description="Abolishes the effect on degradation of mitochondrion-associated cytosolic rRNAs." evidence="12">
    <original>H</original>
    <variation>Y</variation>
    <location>
        <position position="65"/>
    </location>
</feature>
<feature type="mutagenesis site" description="Abolishes the effect on degradation of mitochondrion-associated cytosolic rRNAs." evidence="12">
    <original>H</original>
    <variation>Y</variation>
    <location>
        <position position="118"/>
    </location>
</feature>
<feature type="strand" evidence="18">
    <location>
        <begin position="36"/>
        <end position="42"/>
    </location>
</feature>
<feature type="helix" evidence="18">
    <location>
        <begin position="44"/>
        <end position="47"/>
    </location>
</feature>
<feature type="strand" evidence="18">
    <location>
        <begin position="50"/>
        <end position="52"/>
    </location>
</feature>
<feature type="helix" evidence="18">
    <location>
        <begin position="53"/>
        <end position="55"/>
    </location>
</feature>
<feature type="strand" evidence="18">
    <location>
        <begin position="63"/>
        <end position="71"/>
    </location>
</feature>
<feature type="helix" evidence="18">
    <location>
        <begin position="83"/>
        <end position="89"/>
    </location>
</feature>
<feature type="helix" evidence="18">
    <location>
        <begin position="90"/>
        <end position="96"/>
    </location>
</feature>
<feature type="helix" evidence="18">
    <location>
        <begin position="108"/>
        <end position="117"/>
    </location>
</feature>
<feature type="helix" evidence="18">
    <location>
        <begin position="119"/>
        <end position="122"/>
    </location>
</feature>
<feature type="helix" evidence="18">
    <location>
        <begin position="126"/>
        <end position="128"/>
    </location>
</feature>
<feature type="helix" evidence="18">
    <location>
        <begin position="131"/>
        <end position="145"/>
    </location>
</feature>
<feature type="helix" evidence="18">
    <location>
        <begin position="147"/>
        <end position="153"/>
    </location>
</feature>
<feature type="helix" evidence="18">
    <location>
        <begin position="165"/>
        <end position="176"/>
    </location>
</feature>
<feature type="strand" evidence="18">
    <location>
        <begin position="181"/>
        <end position="185"/>
    </location>
</feature>
<feature type="strand" evidence="18">
    <location>
        <begin position="195"/>
        <end position="204"/>
    </location>
</feature>
<feature type="turn" evidence="18">
    <location>
        <begin position="205"/>
        <end position="207"/>
    </location>
</feature>
<feature type="strand" evidence="18">
    <location>
        <begin position="243"/>
        <end position="247"/>
    </location>
</feature>
<reference key="1">
    <citation type="journal article" date="1997" name="Genomics">
        <title>Mammalian Rh/T2/S-glycoprotein ribonuclease family genes: cloning of a human member located in a region of chromosome 6 (6q27) frequently deleted in human malignancies.</title>
        <authorList>
            <person name="Trubia M."/>
            <person name="Sessa L."/>
            <person name="Taramelli R."/>
        </authorList>
    </citation>
    <scope>NUCLEOTIDE SEQUENCE [MRNA] (ISOFORM 1)</scope>
</reference>
<reference key="2">
    <citation type="journal article" date="2002" name="Oncogene">
        <title>Physical and transcript map of the region between D6S264 and D6S149 on chromosome 6q27, the minimal region of allele loss in sporadic epithelial ovarian cancer.</title>
        <authorList>
            <person name="Liu Y."/>
            <person name="Emilion G."/>
            <person name="Mungall A.J."/>
            <person name="Dunham I."/>
            <person name="Beck S."/>
            <person name="LeMeuth-Metzinger V."/>
            <person name="Shelling A.N."/>
            <person name="Charnock F.M."/>
            <person name="Ganesan T.S."/>
        </authorList>
    </citation>
    <scope>NUCLEOTIDE SEQUENCE [MRNA] (ISOFORMS 1 AND 2)</scope>
</reference>
<reference key="3">
    <citation type="journal article" date="2004" name="Nat. Genet.">
        <title>Complete sequencing and characterization of 21,243 full-length human cDNAs.</title>
        <authorList>
            <person name="Ota T."/>
            <person name="Suzuki Y."/>
            <person name="Nishikawa T."/>
            <person name="Otsuki T."/>
            <person name="Sugiyama T."/>
            <person name="Irie R."/>
            <person name="Wakamatsu A."/>
            <person name="Hayashi K."/>
            <person name="Sato H."/>
            <person name="Nagai K."/>
            <person name="Kimura K."/>
            <person name="Makita H."/>
            <person name="Sekine M."/>
            <person name="Obayashi M."/>
            <person name="Nishi T."/>
            <person name="Shibahara T."/>
            <person name="Tanaka T."/>
            <person name="Ishii S."/>
            <person name="Yamamoto J."/>
            <person name="Saito K."/>
            <person name="Kawai Y."/>
            <person name="Isono Y."/>
            <person name="Nakamura Y."/>
            <person name="Nagahari K."/>
            <person name="Murakami K."/>
            <person name="Yasuda T."/>
            <person name="Iwayanagi T."/>
            <person name="Wagatsuma M."/>
            <person name="Shiratori A."/>
            <person name="Sudo H."/>
            <person name="Hosoiri T."/>
            <person name="Kaku Y."/>
            <person name="Kodaira H."/>
            <person name="Kondo H."/>
            <person name="Sugawara M."/>
            <person name="Takahashi M."/>
            <person name="Kanda K."/>
            <person name="Yokoi T."/>
            <person name="Furuya T."/>
            <person name="Kikkawa E."/>
            <person name="Omura Y."/>
            <person name="Abe K."/>
            <person name="Kamihara K."/>
            <person name="Katsuta N."/>
            <person name="Sato K."/>
            <person name="Tanikawa M."/>
            <person name="Yamazaki M."/>
            <person name="Ninomiya K."/>
            <person name="Ishibashi T."/>
            <person name="Yamashita H."/>
            <person name="Murakawa K."/>
            <person name="Fujimori K."/>
            <person name="Tanai H."/>
            <person name="Kimata M."/>
            <person name="Watanabe M."/>
            <person name="Hiraoka S."/>
            <person name="Chiba Y."/>
            <person name="Ishida S."/>
            <person name="Ono Y."/>
            <person name="Takiguchi S."/>
            <person name="Watanabe S."/>
            <person name="Yosida M."/>
            <person name="Hotuta T."/>
            <person name="Kusano J."/>
            <person name="Kanehori K."/>
            <person name="Takahashi-Fujii A."/>
            <person name="Hara H."/>
            <person name="Tanase T.-O."/>
            <person name="Nomura Y."/>
            <person name="Togiya S."/>
            <person name="Komai F."/>
            <person name="Hara R."/>
            <person name="Takeuchi K."/>
            <person name="Arita M."/>
            <person name="Imose N."/>
            <person name="Musashino K."/>
            <person name="Yuuki H."/>
            <person name="Oshima A."/>
            <person name="Sasaki N."/>
            <person name="Aotsuka S."/>
            <person name="Yoshikawa Y."/>
            <person name="Matsunawa H."/>
            <person name="Ichihara T."/>
            <person name="Shiohata N."/>
            <person name="Sano S."/>
            <person name="Moriya S."/>
            <person name="Momiyama H."/>
            <person name="Satoh N."/>
            <person name="Takami S."/>
            <person name="Terashima Y."/>
            <person name="Suzuki O."/>
            <person name="Nakagawa S."/>
            <person name="Senoh A."/>
            <person name="Mizoguchi H."/>
            <person name="Goto Y."/>
            <person name="Shimizu F."/>
            <person name="Wakebe H."/>
            <person name="Hishigaki H."/>
            <person name="Watanabe T."/>
            <person name="Sugiyama A."/>
            <person name="Takemoto M."/>
            <person name="Kawakami B."/>
            <person name="Yamazaki M."/>
            <person name="Watanabe K."/>
            <person name="Kumagai A."/>
            <person name="Itakura S."/>
            <person name="Fukuzumi Y."/>
            <person name="Fujimori Y."/>
            <person name="Komiyama M."/>
            <person name="Tashiro H."/>
            <person name="Tanigami A."/>
            <person name="Fujiwara T."/>
            <person name="Ono T."/>
            <person name="Yamada K."/>
            <person name="Fujii Y."/>
            <person name="Ozaki K."/>
            <person name="Hirao M."/>
            <person name="Ohmori Y."/>
            <person name="Kawabata A."/>
            <person name="Hikiji T."/>
            <person name="Kobatake N."/>
            <person name="Inagaki H."/>
            <person name="Ikema Y."/>
            <person name="Okamoto S."/>
            <person name="Okitani R."/>
            <person name="Kawakami T."/>
            <person name="Noguchi S."/>
            <person name="Itoh T."/>
            <person name="Shigeta K."/>
            <person name="Senba T."/>
            <person name="Matsumura K."/>
            <person name="Nakajima Y."/>
            <person name="Mizuno T."/>
            <person name="Morinaga M."/>
            <person name="Sasaki M."/>
            <person name="Togashi T."/>
            <person name="Oyama M."/>
            <person name="Hata H."/>
            <person name="Watanabe M."/>
            <person name="Komatsu T."/>
            <person name="Mizushima-Sugano J."/>
            <person name="Satoh T."/>
            <person name="Shirai Y."/>
            <person name="Takahashi Y."/>
            <person name="Nakagawa K."/>
            <person name="Okumura K."/>
            <person name="Nagase T."/>
            <person name="Nomura N."/>
            <person name="Kikuchi H."/>
            <person name="Masuho Y."/>
            <person name="Yamashita R."/>
            <person name="Nakai K."/>
            <person name="Yada T."/>
            <person name="Nakamura Y."/>
            <person name="Ohara O."/>
            <person name="Isogai T."/>
            <person name="Sugano S."/>
        </authorList>
    </citation>
    <scope>NUCLEOTIDE SEQUENCE [LARGE SCALE MRNA] (ISOFORM 1)</scope>
</reference>
<reference key="4">
    <citation type="journal article" date="2003" name="Nature">
        <title>The DNA sequence and analysis of human chromosome 6.</title>
        <authorList>
            <person name="Mungall A.J."/>
            <person name="Palmer S.A."/>
            <person name="Sims S.K."/>
            <person name="Edwards C.A."/>
            <person name="Ashurst J.L."/>
            <person name="Wilming L."/>
            <person name="Jones M.C."/>
            <person name="Horton R."/>
            <person name="Hunt S.E."/>
            <person name="Scott C.E."/>
            <person name="Gilbert J.G.R."/>
            <person name="Clamp M.E."/>
            <person name="Bethel G."/>
            <person name="Milne S."/>
            <person name="Ainscough R."/>
            <person name="Almeida J.P."/>
            <person name="Ambrose K.D."/>
            <person name="Andrews T.D."/>
            <person name="Ashwell R.I.S."/>
            <person name="Babbage A.K."/>
            <person name="Bagguley C.L."/>
            <person name="Bailey J."/>
            <person name="Banerjee R."/>
            <person name="Barker D.J."/>
            <person name="Barlow K.F."/>
            <person name="Bates K."/>
            <person name="Beare D.M."/>
            <person name="Beasley H."/>
            <person name="Beasley O."/>
            <person name="Bird C.P."/>
            <person name="Blakey S.E."/>
            <person name="Bray-Allen S."/>
            <person name="Brook J."/>
            <person name="Brown A.J."/>
            <person name="Brown J.Y."/>
            <person name="Burford D.C."/>
            <person name="Burrill W."/>
            <person name="Burton J."/>
            <person name="Carder C."/>
            <person name="Carter N.P."/>
            <person name="Chapman J.C."/>
            <person name="Clark S.Y."/>
            <person name="Clark G."/>
            <person name="Clee C.M."/>
            <person name="Clegg S."/>
            <person name="Cobley V."/>
            <person name="Collier R.E."/>
            <person name="Collins J.E."/>
            <person name="Colman L.K."/>
            <person name="Corby N.R."/>
            <person name="Coville G.J."/>
            <person name="Culley K.M."/>
            <person name="Dhami P."/>
            <person name="Davies J."/>
            <person name="Dunn M."/>
            <person name="Earthrowl M.E."/>
            <person name="Ellington A.E."/>
            <person name="Evans K.A."/>
            <person name="Faulkner L."/>
            <person name="Francis M.D."/>
            <person name="Frankish A."/>
            <person name="Frankland J."/>
            <person name="French L."/>
            <person name="Garner P."/>
            <person name="Garnett J."/>
            <person name="Ghori M.J."/>
            <person name="Gilby L.M."/>
            <person name="Gillson C.J."/>
            <person name="Glithero R.J."/>
            <person name="Grafham D.V."/>
            <person name="Grant M."/>
            <person name="Gribble S."/>
            <person name="Griffiths C."/>
            <person name="Griffiths M.N.D."/>
            <person name="Hall R."/>
            <person name="Halls K.S."/>
            <person name="Hammond S."/>
            <person name="Harley J.L."/>
            <person name="Hart E.A."/>
            <person name="Heath P.D."/>
            <person name="Heathcott R."/>
            <person name="Holmes S.J."/>
            <person name="Howden P.J."/>
            <person name="Howe K.L."/>
            <person name="Howell G.R."/>
            <person name="Huckle E."/>
            <person name="Humphray S.J."/>
            <person name="Humphries M.D."/>
            <person name="Hunt A.R."/>
            <person name="Johnson C.M."/>
            <person name="Joy A.A."/>
            <person name="Kay M."/>
            <person name="Keenan S.J."/>
            <person name="Kimberley A.M."/>
            <person name="King A."/>
            <person name="Laird G.K."/>
            <person name="Langford C."/>
            <person name="Lawlor S."/>
            <person name="Leongamornlert D.A."/>
            <person name="Leversha M."/>
            <person name="Lloyd C.R."/>
            <person name="Lloyd D.M."/>
            <person name="Loveland J.E."/>
            <person name="Lovell J."/>
            <person name="Martin S."/>
            <person name="Mashreghi-Mohammadi M."/>
            <person name="Maslen G.L."/>
            <person name="Matthews L."/>
            <person name="McCann O.T."/>
            <person name="McLaren S.J."/>
            <person name="McLay K."/>
            <person name="McMurray A."/>
            <person name="Moore M.J.F."/>
            <person name="Mullikin J.C."/>
            <person name="Niblett D."/>
            <person name="Nickerson T."/>
            <person name="Novik K.L."/>
            <person name="Oliver K."/>
            <person name="Overton-Larty E.K."/>
            <person name="Parker A."/>
            <person name="Patel R."/>
            <person name="Pearce A.V."/>
            <person name="Peck A.I."/>
            <person name="Phillimore B.J.C.T."/>
            <person name="Phillips S."/>
            <person name="Plumb R.W."/>
            <person name="Porter K.M."/>
            <person name="Ramsey Y."/>
            <person name="Ranby S.A."/>
            <person name="Rice C.M."/>
            <person name="Ross M.T."/>
            <person name="Searle S.M."/>
            <person name="Sehra H.K."/>
            <person name="Sheridan E."/>
            <person name="Skuce C.D."/>
            <person name="Smith S."/>
            <person name="Smith M."/>
            <person name="Spraggon L."/>
            <person name="Squares S.L."/>
            <person name="Steward C.A."/>
            <person name="Sycamore N."/>
            <person name="Tamlyn-Hall G."/>
            <person name="Tester J."/>
            <person name="Theaker A.J."/>
            <person name="Thomas D.W."/>
            <person name="Thorpe A."/>
            <person name="Tracey A."/>
            <person name="Tromans A."/>
            <person name="Tubby B."/>
            <person name="Wall M."/>
            <person name="Wallis J.M."/>
            <person name="West A.P."/>
            <person name="White S.S."/>
            <person name="Whitehead S.L."/>
            <person name="Whittaker H."/>
            <person name="Wild A."/>
            <person name="Willey D.J."/>
            <person name="Wilmer T.E."/>
            <person name="Wood J.M."/>
            <person name="Wray P.W."/>
            <person name="Wyatt J.C."/>
            <person name="Young L."/>
            <person name="Younger R.M."/>
            <person name="Bentley D.R."/>
            <person name="Coulson A."/>
            <person name="Durbin R.M."/>
            <person name="Hubbard T."/>
            <person name="Sulston J.E."/>
            <person name="Dunham I."/>
            <person name="Rogers J."/>
            <person name="Beck S."/>
        </authorList>
    </citation>
    <scope>NUCLEOTIDE SEQUENCE [LARGE SCALE GENOMIC DNA]</scope>
</reference>
<reference key="5">
    <citation type="submission" date="2005-09" db="EMBL/GenBank/DDBJ databases">
        <authorList>
            <person name="Mural R.J."/>
            <person name="Istrail S."/>
            <person name="Sutton G.G."/>
            <person name="Florea L."/>
            <person name="Halpern A.L."/>
            <person name="Mobarry C.M."/>
            <person name="Lippert R."/>
            <person name="Walenz B."/>
            <person name="Shatkay H."/>
            <person name="Dew I."/>
            <person name="Miller J.R."/>
            <person name="Flanigan M.J."/>
            <person name="Edwards N.J."/>
            <person name="Bolanos R."/>
            <person name="Fasulo D."/>
            <person name="Halldorsson B.V."/>
            <person name="Hannenhalli S."/>
            <person name="Turner R."/>
            <person name="Yooseph S."/>
            <person name="Lu F."/>
            <person name="Nusskern D.R."/>
            <person name="Shue B.C."/>
            <person name="Zheng X.H."/>
            <person name="Zhong F."/>
            <person name="Delcher A.L."/>
            <person name="Huson D.H."/>
            <person name="Kravitz S.A."/>
            <person name="Mouchard L."/>
            <person name="Reinert K."/>
            <person name="Remington K.A."/>
            <person name="Clark A.G."/>
            <person name="Waterman M.S."/>
            <person name="Eichler E.E."/>
            <person name="Adams M.D."/>
            <person name="Hunkapiller M.W."/>
            <person name="Myers E.W."/>
            <person name="Venter J.C."/>
        </authorList>
    </citation>
    <scope>NUCLEOTIDE SEQUENCE [LARGE SCALE GENOMIC DNA]</scope>
</reference>
<reference key="6">
    <citation type="journal article" date="2004" name="Genome Res.">
        <title>The status, quality, and expansion of the NIH full-length cDNA project: the Mammalian Gene Collection (MGC).</title>
        <authorList>
            <consortium name="The MGC Project Team"/>
        </authorList>
    </citation>
    <scope>NUCLEOTIDE SEQUENCE [LARGE SCALE MRNA] (ISOFORM 1)</scope>
    <source>
        <tissue>Colon</tissue>
        <tissue>Pancreas</tissue>
        <tissue>Spleen</tissue>
    </source>
</reference>
<reference key="7">
    <citation type="journal article" date="2005" name="Int. J. Oncol.">
        <title>Tumor and metastasis suppression by the human RNASET2 gene.</title>
        <authorList>
            <person name="Acquati F."/>
            <person name="Possati L."/>
            <person name="Ferrante L."/>
            <person name="Campomenosi P."/>
            <person name="Talevi S."/>
            <person name="Bardelli S."/>
            <person name="Margiotta C."/>
            <person name="Russo A."/>
            <person name="Bortoletto E."/>
            <person name="Rocchetti R."/>
            <person name="Calza R."/>
            <person name="Cinquetti R."/>
            <person name="Monti L."/>
            <person name="Salis S."/>
            <person name="Barbanti-Brodano G."/>
            <person name="Taramelli R."/>
        </authorList>
    </citation>
    <scope>SUBCELLULAR LOCATION</scope>
</reference>
<reference key="8">
    <citation type="journal article" date="2006" name="Arch. Biochem. Biophys.">
        <title>Characterization of RNASET2, the first human member of the Rh/T2/S family of glycoproteins.</title>
        <authorList>
            <person name="Campomenosi P."/>
            <person name="Salis S."/>
            <person name="Lindqvist C."/>
            <person name="Mariani D."/>
            <person name="Nordstrom T."/>
            <person name="Acquati F."/>
            <person name="Taramelli R."/>
        </authorList>
    </citation>
    <scope>FUNCTION</scope>
    <scope>SUBCELLULAR LOCATION</scope>
</reference>
<reference key="9">
    <citation type="journal article" date="2009" name="Nat. Genet.">
        <title>RNASET2-deficient cystic leukoencephalopathy resembles congenital cytomegalovirus brain infection.</title>
        <authorList>
            <person name="Henneke M."/>
            <person name="Diekmann S."/>
            <person name="Ohlenbusch A."/>
            <person name="Kaiser J."/>
            <person name="Engelbrecht V."/>
            <person name="Kohlschutter A."/>
            <person name="Kratzner R."/>
            <person name="Madruga-Garrido M."/>
            <person name="Mayer M."/>
            <person name="Opitz L."/>
            <person name="Rodriguez D."/>
            <person name="Ruschendorf F."/>
            <person name="Schumacher J."/>
            <person name="Thiele H."/>
            <person name="Thoms S."/>
            <person name="Steinfeld R."/>
            <person name="Nurnberg P."/>
            <person name="Gartner J."/>
        </authorList>
    </citation>
    <scope>FUNCTION</scope>
    <scope>SUBCELLULAR LOCATION</scope>
    <scope>TISSUE SPECIFICITY</scope>
    <scope>VARIANT LCWM ARG-184</scope>
    <scope>CHARACTERIZATION OF VARIANT LCWM ARG-184</scope>
</reference>
<reference key="10">
    <citation type="journal article" date="2011" name="BMC Syst. Biol.">
        <title>Initial characterization of the human central proteome.</title>
        <authorList>
            <person name="Burkard T.R."/>
            <person name="Planyavsky M."/>
            <person name="Kaupe I."/>
            <person name="Breitwieser F.P."/>
            <person name="Buerckstuemmer T."/>
            <person name="Bennett K.L."/>
            <person name="Superti-Furga G."/>
            <person name="Colinge J."/>
        </authorList>
    </citation>
    <scope>IDENTIFICATION BY MASS SPECTROMETRY [LARGE SCALE ANALYSIS]</scope>
</reference>
<reference key="11">
    <citation type="journal article" date="2011" name="Proc. Natl. Acad. Sci. U.S.A.">
        <title>rnaset2 mutant zebrafish model familial cystic leukoencephalopathy and reveal a role for RNase T2 in degrading ribosomal RNA.</title>
        <authorList>
            <person name="Haud N."/>
            <person name="Kara F."/>
            <person name="Diekmann S."/>
            <person name="Henneke M."/>
            <person name="Willer J.R."/>
            <person name="Hillwig M.S."/>
            <person name="Gregg R.G."/>
            <person name="Macintosh G.C."/>
            <person name="Gartner J."/>
            <person name="Alia A."/>
            <person name="Hurlstone A.F."/>
        </authorList>
    </citation>
    <scope>SUBCELLULAR LOCATION</scope>
    <scope>CHARACTERIZATION OF VARIANT LCWM ARG-184</scope>
</reference>
<reference key="12">
    <citation type="journal article" date="2015" name="Proteomics">
        <title>N-terminome analysis of the human mitochondrial proteome.</title>
        <authorList>
            <person name="Vaca Jacome A.S."/>
            <person name="Rabilloud T."/>
            <person name="Schaeffer-Reiss C."/>
            <person name="Rompais M."/>
            <person name="Ayoub D."/>
            <person name="Lane L."/>
            <person name="Bairoch A."/>
            <person name="Van Dorsselaer A."/>
            <person name="Carapito C."/>
        </authorList>
    </citation>
    <scope>IDENTIFICATION BY MASS SPECTROMETRY [LARGE SCALE ANALYSIS]</scope>
</reference>
<reference key="13">
    <citation type="journal article" date="2017" name="Protein Cell">
        <title>Mammalian mitochondrial RNAs are degraded in the mitochondrial intermembrane space by RNASET2.</title>
        <authorList>
            <person name="Liu P."/>
            <person name="Huang J."/>
            <person name="Zheng Q."/>
            <person name="Xie L."/>
            <person name="Lu X."/>
            <person name="Jin J."/>
            <person name="Wang G."/>
        </authorList>
    </citation>
    <scope>FUNCTION</scope>
    <scope>SUBCELLULAR LOCATION</scope>
    <scope>CHARACTERIZATION OF VARIANT ARG-184</scope>
</reference>
<reference key="14">
    <citation type="journal article" date="2018" name="J. Biol. Chem.">
        <title>Regulation of mitochondrion-associated cytosolic ribosomes by mammalian mitochondrial ribonuclease T2 (RNASET2).</title>
        <authorList>
            <person name="Huang J."/>
            <person name="Liu P."/>
            <person name="Wang G."/>
        </authorList>
    </citation>
    <scope>FUNCTION</scope>
    <scope>MUTAGENESIS OF HIS-65 AND HIS-118</scope>
    <scope>SUBCELLULAR LOCATION</scope>
</reference>
<reference key="15">
    <citation type="journal article" date="2018" name="Cell Rep.">
        <title>Mitochondrial Trafficking and Processing of Telomerase RNA TERC.</title>
        <authorList>
            <person name="Cheng Y."/>
            <person name="Liu P."/>
            <person name="Zheng Q."/>
            <person name="Gao G."/>
            <person name="Yuan J."/>
            <person name="Wang P."/>
            <person name="Huang J."/>
            <person name="Xie L."/>
            <person name="Lu X."/>
            <person name="Tong T."/>
            <person name="Chen J."/>
            <person name="Lu Z."/>
            <person name="Guan J."/>
            <person name="Wang G."/>
        </authorList>
    </citation>
    <scope>FUNCTION</scope>
    <scope>SUBCELLULAR LOCATION</scope>
</reference>
<reference key="16">
    <citation type="journal article" date="2019" name="Cell">
        <title>TLR8 Is a Sensor of RNase T2 Degradation Products.</title>
        <authorList>
            <person name="Greulich W."/>
            <person name="Wagner M."/>
            <person name="Gaidt M.M."/>
            <person name="Stafford C."/>
            <person name="Cheng Y."/>
            <person name="Linder A."/>
            <person name="Carell T."/>
            <person name="Hornung V."/>
        </authorList>
    </citation>
    <scope>FUNCTION</scope>
    <scope>CATALYTIC ACTIVITY</scope>
</reference>
<reference key="17">
    <citation type="journal article" date="2024" name="Immunity">
        <title>Lysosomal endonuclease RNase T2 and PLD exonucleases cooperatively generate RNA ligands for TLR7 activation.</title>
        <authorList>
            <person name="Berouti M."/>
            <person name="Lammens K."/>
            <person name="Heiss M."/>
            <person name="Hansbauer L."/>
            <person name="Bauernfried S."/>
            <person name="Stoeckl J."/>
            <person name="Pinci F."/>
            <person name="Piseddu I."/>
            <person name="Greulich W."/>
            <person name="Wang M."/>
            <person name="Jung C."/>
            <person name="Froehlich T."/>
            <person name="Carell T."/>
            <person name="Hopfner K.P."/>
            <person name="Hornung V."/>
        </authorList>
    </citation>
    <scope>FUNCTION</scope>
    <scope>CATALYTIC ACTIVITY</scope>
</reference>
<reference key="18">
    <citation type="journal article" date="2012" name="Nucleic Acids Res.">
        <title>Structure and activity of the only human RNase T2.</title>
        <authorList>
            <person name="Thorn A."/>
            <person name="Steinfeld R."/>
            <person name="Ziegenbein M."/>
            <person name="Grapp M."/>
            <person name="Hsiao H.H."/>
            <person name="Urlaub H."/>
            <person name="Sheldrick G.M."/>
            <person name="Gartner J."/>
            <person name="Kratzner R."/>
        </authorList>
    </citation>
    <scope>X-RAY CRYSTALLOGRAPHY (1.59 ANGSTROMS) OF 25-256</scope>
    <scope>GLYCOSYLATION AT ASN-76; ASN-106 AND ASN-212</scope>
    <scope>FUNCTION</scope>
    <scope>ACTIVITY REGULATION</scope>
    <scope>DISULFIDE BONDS</scope>
    <scope>IDENTIFICATION BY MASS SPECTROMETRY</scope>
</reference>
<name>RNT2_HUMAN</name>
<comment type="function">
    <text evidence="6 7 9 10 11 12 13 14">Ribonuclease that plays an essential role in innate immune response by recognizing and degrading RNAs from microbial pathogens that are subsequently sensed by TLR8 (PubMed:31778653). Cleaves preferentially single-stranded RNA molecules between purine and uridine residues, which critically contributes to the supply of catabolic uridine and the generation of purine-2',3'-cyclophosphate-terminated oligoribonucleotides (PubMed:31778653, PubMed:38697119). In turn, RNase T2 degradation products promote the RNA-dependent activation of TLR8 (PubMed:31778653). In plasmacytoid dendritic cells, it cooperates with PLD3 or PLD4 5'-&gt;3' exonucleases to process RNA fragments and release 2',3'-cyclic guanosine monophosphate (2',3'-cGMP), a potent stimulatory ligand for TLR7 (PubMed:38697119). Also plays a key role in degradation of mitochondrial RNA and processing of non-coding RNA imported from the cytosol into mitochondria (PubMed:28730546, PubMed:30184494). Participates as well in degradation of mitochondrion-associated cytosolic rRNAs (PubMed:30385512).</text>
</comment>
<comment type="catalytic activity">
    <reaction evidence="4 14">
        <text>a ribonucleotidyl-ribonucleotide-RNA + H2O = a 3'-end 3'-phospho-ribonucleotide-RNA + a 5'-end dephospho-ribonucleoside-RNA + H(+)</text>
        <dbReference type="Rhea" id="RHEA:68052"/>
        <dbReference type="Rhea" id="RHEA-COMP:10463"/>
        <dbReference type="Rhea" id="RHEA-COMP:13936"/>
        <dbReference type="Rhea" id="RHEA-COMP:17355"/>
        <dbReference type="ChEBI" id="CHEBI:15377"/>
        <dbReference type="ChEBI" id="CHEBI:15378"/>
        <dbReference type="ChEBI" id="CHEBI:83062"/>
        <dbReference type="ChEBI" id="CHEBI:138284"/>
        <dbReference type="ChEBI" id="CHEBI:173118"/>
        <dbReference type="EC" id="4.6.1.19"/>
    </reaction>
</comment>
<comment type="catalytic activity">
    <reaction evidence="13">
        <text>an adenylyl-uridine-RNA = a 3'-end 2',3'-cyclophospho-AMP-RNA + a 5'-end dephospho-uridine-RNA</text>
        <dbReference type="Rhea" id="RHEA:81383"/>
        <dbReference type="Rhea" id="RHEA-COMP:17356"/>
        <dbReference type="Rhea" id="RHEA-COMP:19675"/>
        <dbReference type="Rhea" id="RHEA-COMP:19676"/>
        <dbReference type="ChEBI" id="CHEBI:173224"/>
        <dbReference type="ChEBI" id="CHEBI:231879"/>
        <dbReference type="ChEBI" id="CHEBI:231881"/>
    </reaction>
    <physiologicalReaction direction="left-to-right" evidence="17">
        <dbReference type="Rhea" id="RHEA:81384"/>
    </physiologicalReaction>
</comment>
<comment type="catalytic activity">
    <reaction evidence="14">
        <text>a guanylyl-uridine-RNA = a 3'-end 2',3'-cyclophospho-GMP-RNA + a 5'-end dephospho-uridine-RNA</text>
        <dbReference type="Rhea" id="RHEA:81323"/>
        <dbReference type="Rhea" id="RHEA-COMP:17356"/>
        <dbReference type="Rhea" id="RHEA-COMP:19658"/>
        <dbReference type="Rhea" id="RHEA-COMP:19659"/>
        <dbReference type="ChEBI" id="CHEBI:173224"/>
        <dbReference type="ChEBI" id="CHEBI:231849"/>
        <dbReference type="ChEBI" id="CHEBI:231850"/>
    </reaction>
</comment>
<comment type="activity regulation">
    <text evidence="9">Inhibited by Zn(2+) and Cu(2+).</text>
</comment>
<comment type="subcellular location">
    <subcellularLocation>
        <location evidence="5 6">Secreted</location>
    </subcellularLocation>
    <subcellularLocation>
        <location evidence="6">Lysosome lumen</location>
    </subcellularLocation>
    <subcellularLocation>
        <location evidence="6">Endoplasmic reticulum lumen</location>
    </subcellularLocation>
    <subcellularLocation>
        <location evidence="10 11 12">Mitochondrion intermembrane space</location>
    </subcellularLocation>
    <text evidence="6">Full-length RNASET2 is found in the endoplasmic reticulum while smaller RNASET2 proteolytic products are found in the lysosome fraction.</text>
</comment>
<comment type="alternative products">
    <event type="alternative splicing"/>
    <isoform>
        <id>O00584-1</id>
        <name>1</name>
        <sequence type="displayed"/>
    </isoform>
    <isoform>
        <id>O00584-2</id>
        <name>2</name>
        <sequence type="described" ref="VSP_008405 VSP_008406"/>
    </isoform>
</comment>
<comment type="tissue specificity">
    <text evidence="7">Ubiquitous. Higher expression levels observed in the temporal lobe and fetal brain.</text>
</comment>
<comment type="disease" evidence="7 8">
    <disease id="DI-02726">
        <name>Leukoencephalopathy, cystic, without megalencephaly</name>
        <acronym>LCWM</acronym>
        <description>An infantile-onset syndrome of cerebral leukoencephalopathy. Affected newborns develop microcephaly and neurologic abnormalities including psychomotor impairment, seizures and sensorineural hearing impairment. The brain shows multifocal white matter lesions, anterior temporal lobe subcortical cysts, pericystic abnormal myelination, ventriculomegaly and intracranial calcifications.</description>
        <dbReference type="MIM" id="612951"/>
    </disease>
    <text>The disease is caused by variants affecting the gene represented in this entry.</text>
</comment>
<comment type="miscellaneous">
    <molecule>Isoform 2</molecule>
    <text evidence="16">May be produced at very low levels due to a premature stop codon in the mRNA, leading to nonsense-mediated mRNA decay.</text>
</comment>
<comment type="similarity">
    <text evidence="16">Belongs to the RNase T2 family.</text>
</comment>
<comment type="online information" name="Atlas of Genetics and Cytogenetics in Oncology and Haematology">
    <link uri="https://atlasgeneticsoncology.org/gene/518/RNASET2"/>
</comment>
<sequence>MRPAALRGALLGCLCLALLCLGGADKRLRDNHEWKKLIMVQHWPETVCEKIQNDCRDPPDYWTIHGLWPDKSEGCNRSWPFNLEEIKDLLPEMRAYWPDVIHSFPNRSRFWKHEWEKHGTCAAQVDALNSQKKYFGRSLELYRELDLNSVLLKLGIKPSINYYQVADFKDALARVYGVIPKIQCLPPSQDEEVQTIGQIELCLTKQDQQLQNCTEPGEQPSPKQEVWLANGAAESRGLRVCEDGPVFYPPPKKTKH</sequence>
<proteinExistence type="evidence at protein level"/>
<evidence type="ECO:0000250" key="1">
    <source>
        <dbReference type="UniProtKB" id="P08056"/>
    </source>
</evidence>
<evidence type="ECO:0000255" key="2"/>
<evidence type="ECO:0000255" key="3">
    <source>
        <dbReference type="PROSITE-ProRule" id="PRU10045"/>
    </source>
</evidence>
<evidence type="ECO:0000255" key="4">
    <source>
        <dbReference type="PROSITE-ProRule" id="PRU10046"/>
    </source>
</evidence>
<evidence type="ECO:0000269" key="5">
    <source>
    </source>
</evidence>
<evidence type="ECO:0000269" key="6">
    <source>
    </source>
</evidence>
<evidence type="ECO:0000269" key="7">
    <source>
    </source>
</evidence>
<evidence type="ECO:0000269" key="8">
    <source>
    </source>
</evidence>
<evidence type="ECO:0000269" key="9">
    <source>
    </source>
</evidence>
<evidence type="ECO:0000269" key="10">
    <source>
    </source>
</evidence>
<evidence type="ECO:0000269" key="11">
    <source>
    </source>
</evidence>
<evidence type="ECO:0000269" key="12">
    <source>
    </source>
</evidence>
<evidence type="ECO:0000269" key="13">
    <source>
    </source>
</evidence>
<evidence type="ECO:0000269" key="14">
    <source>
    </source>
</evidence>
<evidence type="ECO:0000303" key="15">
    <source>
    </source>
</evidence>
<evidence type="ECO:0000305" key="16"/>
<evidence type="ECO:0000305" key="17">
    <source>
    </source>
</evidence>
<evidence type="ECO:0007829" key="18">
    <source>
        <dbReference type="PDB" id="3T0O"/>
    </source>
</evidence>
<organism>
    <name type="scientific">Homo sapiens</name>
    <name type="common">Human</name>
    <dbReference type="NCBI Taxonomy" id="9606"/>
    <lineage>
        <taxon>Eukaryota</taxon>
        <taxon>Metazoa</taxon>
        <taxon>Chordata</taxon>
        <taxon>Craniata</taxon>
        <taxon>Vertebrata</taxon>
        <taxon>Euteleostomi</taxon>
        <taxon>Mammalia</taxon>
        <taxon>Eutheria</taxon>
        <taxon>Euarchontoglires</taxon>
        <taxon>Primates</taxon>
        <taxon>Haplorrhini</taxon>
        <taxon>Catarrhini</taxon>
        <taxon>Hominidae</taxon>
        <taxon>Homo</taxon>
    </lineage>
</organism>
<accession>O00584</accession>
<accession>B2RDA7</accession>
<accession>E1P5C3</accession>
<accession>Q5T8Q0</accession>
<accession>Q8TCU2</accession>
<accession>Q9BZ46</accession>
<accession>Q9BZ47</accession>
<keyword id="KW-0002">3D-structure</keyword>
<keyword id="KW-0025">Alternative splicing</keyword>
<keyword id="KW-0225">Disease variant</keyword>
<keyword id="KW-1015">Disulfide bond</keyword>
<keyword id="KW-0255">Endonuclease</keyword>
<keyword id="KW-0256">Endoplasmic reticulum</keyword>
<keyword id="KW-0325">Glycoprotein</keyword>
<keyword id="KW-0378">Hydrolase</keyword>
<keyword id="KW-0391">Immunity</keyword>
<keyword id="KW-0399">Innate immunity</keyword>
<keyword id="KW-0456">Lyase</keyword>
<keyword id="KW-0458">Lysosome</keyword>
<keyword id="KW-0496">Mitochondrion</keyword>
<keyword id="KW-0540">Nuclease</keyword>
<keyword id="KW-1267">Proteomics identification</keyword>
<keyword id="KW-1185">Reference proteome</keyword>
<keyword id="KW-0964">Secreted</keyword>
<keyword id="KW-0732">Signal</keyword>
<protein>
    <recommendedName>
        <fullName>Ribonuclease T2</fullName>
        <ecNumber evidence="4">4.6.1.19</ecNumber>
    </recommendedName>
    <alternativeName>
        <fullName>Ribonuclease 6</fullName>
    </alternativeName>
</protein>
<gene>
    <name type="primary">RNASET2</name>
    <name type="synonym">RNASE6PL</name>
</gene>